<name>PPR18_ARATH</name>
<reference key="1">
    <citation type="journal article" date="2000" name="Nature">
        <title>Sequence and analysis of chromosome 1 of the plant Arabidopsis thaliana.</title>
        <authorList>
            <person name="Theologis A."/>
            <person name="Ecker J.R."/>
            <person name="Palm C.J."/>
            <person name="Federspiel N.A."/>
            <person name="Kaul S."/>
            <person name="White O."/>
            <person name="Alonso J."/>
            <person name="Altafi H."/>
            <person name="Araujo R."/>
            <person name="Bowman C.L."/>
            <person name="Brooks S.Y."/>
            <person name="Buehler E."/>
            <person name="Chan A."/>
            <person name="Chao Q."/>
            <person name="Chen H."/>
            <person name="Cheuk R.F."/>
            <person name="Chin C.W."/>
            <person name="Chung M.K."/>
            <person name="Conn L."/>
            <person name="Conway A.B."/>
            <person name="Conway A.R."/>
            <person name="Creasy T.H."/>
            <person name="Dewar K."/>
            <person name="Dunn P."/>
            <person name="Etgu P."/>
            <person name="Feldblyum T.V."/>
            <person name="Feng J.-D."/>
            <person name="Fong B."/>
            <person name="Fujii C.Y."/>
            <person name="Gill J.E."/>
            <person name="Goldsmith A.D."/>
            <person name="Haas B."/>
            <person name="Hansen N.F."/>
            <person name="Hughes B."/>
            <person name="Huizar L."/>
            <person name="Hunter J.L."/>
            <person name="Jenkins J."/>
            <person name="Johnson-Hopson C."/>
            <person name="Khan S."/>
            <person name="Khaykin E."/>
            <person name="Kim C.J."/>
            <person name="Koo H.L."/>
            <person name="Kremenetskaia I."/>
            <person name="Kurtz D.B."/>
            <person name="Kwan A."/>
            <person name="Lam B."/>
            <person name="Langin-Hooper S."/>
            <person name="Lee A."/>
            <person name="Lee J.M."/>
            <person name="Lenz C.A."/>
            <person name="Li J.H."/>
            <person name="Li Y.-P."/>
            <person name="Lin X."/>
            <person name="Liu S.X."/>
            <person name="Liu Z.A."/>
            <person name="Luros J.S."/>
            <person name="Maiti R."/>
            <person name="Marziali A."/>
            <person name="Militscher J."/>
            <person name="Miranda M."/>
            <person name="Nguyen M."/>
            <person name="Nierman W.C."/>
            <person name="Osborne B.I."/>
            <person name="Pai G."/>
            <person name="Peterson J."/>
            <person name="Pham P.K."/>
            <person name="Rizzo M."/>
            <person name="Rooney T."/>
            <person name="Rowley D."/>
            <person name="Sakano H."/>
            <person name="Salzberg S.L."/>
            <person name="Schwartz J.R."/>
            <person name="Shinn P."/>
            <person name="Southwick A.M."/>
            <person name="Sun H."/>
            <person name="Tallon L.J."/>
            <person name="Tambunga G."/>
            <person name="Toriumi M.J."/>
            <person name="Town C.D."/>
            <person name="Utterback T."/>
            <person name="Van Aken S."/>
            <person name="Vaysberg M."/>
            <person name="Vysotskaia V.S."/>
            <person name="Walker M."/>
            <person name="Wu D."/>
            <person name="Yu G."/>
            <person name="Fraser C.M."/>
            <person name="Venter J.C."/>
            <person name="Davis R.W."/>
        </authorList>
    </citation>
    <scope>NUCLEOTIDE SEQUENCE [LARGE SCALE GENOMIC DNA]</scope>
    <source>
        <strain>cv. Columbia</strain>
    </source>
</reference>
<reference key="2">
    <citation type="journal article" date="2017" name="Plant J.">
        <title>Araport11: a complete reannotation of the Arabidopsis thaliana reference genome.</title>
        <authorList>
            <person name="Cheng C.Y."/>
            <person name="Krishnakumar V."/>
            <person name="Chan A.P."/>
            <person name="Thibaud-Nissen F."/>
            <person name="Schobel S."/>
            <person name="Town C.D."/>
        </authorList>
    </citation>
    <scope>GENOME REANNOTATION</scope>
    <source>
        <strain>cv. Columbia</strain>
    </source>
</reference>
<reference key="3">
    <citation type="submission" date="2004-10" db="EMBL/GenBank/DDBJ databases">
        <authorList>
            <person name="Liu T."/>
            <person name="Shan D."/>
        </authorList>
    </citation>
    <scope>NUCLEOTIDE SEQUENCE [GENOMIC DNA] OF 42-987</scope>
    <source>
        <strain>cv. Landsberg erecta</strain>
    </source>
</reference>
<reference key="4">
    <citation type="journal article" date="2004" name="Plant Cell">
        <title>Genome-wide analysis of Arabidopsis pentatricopeptide repeat proteins reveals their essential role in organelle biogenesis.</title>
        <authorList>
            <person name="Lurin C."/>
            <person name="Andres C."/>
            <person name="Aubourg S."/>
            <person name="Bellaoui M."/>
            <person name="Bitton F."/>
            <person name="Bruyere C."/>
            <person name="Caboche M."/>
            <person name="Debast C."/>
            <person name="Gualberto J."/>
            <person name="Hoffmann B."/>
            <person name="Lecharny A."/>
            <person name="Le Ret M."/>
            <person name="Martin-Magniette M.-L."/>
            <person name="Mireau H."/>
            <person name="Peeters N."/>
            <person name="Renou J.-P."/>
            <person name="Szurek B."/>
            <person name="Taconnat L."/>
            <person name="Small I."/>
        </authorList>
    </citation>
    <scope>GENE FAMILY</scope>
</reference>
<feature type="transit peptide" description="Mitochondrion" evidence="1">
    <location>
        <begin position="1"/>
        <end position="42"/>
    </location>
</feature>
<feature type="chain" id="PRO_0000342759" description="Pentatricopeptide repeat-containing protein At1g06710, mitochondrial">
    <location>
        <begin position="43"/>
        <end position="987"/>
    </location>
</feature>
<feature type="repeat" description="PPR 1">
    <location>
        <begin position="164"/>
        <end position="198"/>
    </location>
</feature>
<feature type="repeat" description="PPR 2">
    <location>
        <begin position="199"/>
        <end position="233"/>
    </location>
</feature>
<feature type="repeat" description="PPR 3">
    <location>
        <begin position="234"/>
        <end position="268"/>
    </location>
</feature>
<feature type="repeat" description="PPR 4">
    <location>
        <begin position="269"/>
        <end position="299"/>
    </location>
</feature>
<feature type="repeat" description="PPR 5">
    <location>
        <begin position="301"/>
        <end position="335"/>
    </location>
</feature>
<feature type="repeat" description="PPR 6">
    <location>
        <begin position="336"/>
        <end position="370"/>
    </location>
</feature>
<feature type="repeat" description="PPR 7">
    <location>
        <begin position="371"/>
        <end position="405"/>
    </location>
</feature>
<feature type="repeat" description="PPR 8">
    <location>
        <begin position="406"/>
        <end position="446"/>
    </location>
</feature>
<feature type="repeat" description="PPR 9">
    <location>
        <begin position="447"/>
        <end position="481"/>
    </location>
</feature>
<feature type="repeat" description="PPR 10">
    <location>
        <begin position="482"/>
        <end position="516"/>
    </location>
</feature>
<feature type="repeat" description="PPR 11">
    <location>
        <begin position="517"/>
        <end position="551"/>
    </location>
</feature>
<feature type="repeat" description="PPR 12">
    <location>
        <begin position="552"/>
        <end position="586"/>
    </location>
</feature>
<feature type="repeat" description="PPR 13">
    <location>
        <begin position="587"/>
        <end position="621"/>
    </location>
</feature>
<feature type="repeat" description="PPR 14">
    <location>
        <begin position="638"/>
        <end position="672"/>
    </location>
</feature>
<feature type="repeat" description="PPR 15">
    <location>
        <begin position="673"/>
        <end position="707"/>
    </location>
</feature>
<feature type="repeat" description="PPR 16">
    <location>
        <begin position="708"/>
        <end position="742"/>
    </location>
</feature>
<feature type="repeat" description="PPR 17">
    <location>
        <begin position="743"/>
        <end position="777"/>
    </location>
</feature>
<feature type="repeat" description="PPR 18">
    <location>
        <begin position="778"/>
        <end position="812"/>
    </location>
</feature>
<feature type="repeat" description="PPR 19">
    <location>
        <begin position="813"/>
        <end position="847"/>
    </location>
</feature>
<feature type="repeat" description="PPR 20">
    <location>
        <begin position="881"/>
        <end position="915"/>
    </location>
</feature>
<feature type="repeat" description="PPR 21">
    <location>
        <begin position="918"/>
        <end position="952"/>
    </location>
</feature>
<feature type="repeat" description="PPR 22">
    <location>
        <begin position="953"/>
        <end position="987"/>
    </location>
</feature>
<feature type="sequence conflict" description="In Ref. 3; AAV58825." evidence="2" ref="3">
    <original>S</original>
    <variation>T</variation>
    <location>
        <position position="109"/>
    </location>
</feature>
<feature type="sequence conflict" description="In Ref. 3; AAV58825." evidence="2" ref="3">
    <original>E</original>
    <variation>Q</variation>
    <location>
        <position position="201"/>
    </location>
</feature>
<feature type="sequence conflict" description="In Ref. 3; AAV58825." evidence="2" ref="3">
    <original>C</original>
    <variation>F</variation>
    <location>
        <position position="426"/>
    </location>
</feature>
<keyword id="KW-0496">Mitochondrion</keyword>
<keyword id="KW-1185">Reference proteome</keyword>
<keyword id="KW-0677">Repeat</keyword>
<keyword id="KW-0809">Transit peptide</keyword>
<proteinExistence type="inferred from homology"/>
<gene>
    <name type="ordered locus">At1g06710</name>
    <name type="ORF">F4H5.20</name>
</gene>
<dbReference type="EMBL" id="AC011001">
    <property type="protein sequence ID" value="AAF63148.1"/>
    <property type="molecule type" value="Genomic_DNA"/>
</dbReference>
<dbReference type="EMBL" id="CP002684">
    <property type="protein sequence ID" value="AEE28027.1"/>
    <property type="status" value="ALT_SEQ"/>
    <property type="molecule type" value="Genomic_DNA"/>
</dbReference>
<dbReference type="EMBL" id="CP002684">
    <property type="protein sequence ID" value="ANM58760.1"/>
    <property type="molecule type" value="Genomic_DNA"/>
</dbReference>
<dbReference type="EMBL" id="CP002684">
    <property type="protein sequence ID" value="ANM58761.1"/>
    <property type="molecule type" value="Genomic_DNA"/>
</dbReference>
<dbReference type="EMBL" id="CP002684">
    <property type="protein sequence ID" value="ANM58762.1"/>
    <property type="molecule type" value="Genomic_DNA"/>
</dbReference>
<dbReference type="EMBL" id="CP002684">
    <property type="protein sequence ID" value="ANM58763.1"/>
    <property type="molecule type" value="Genomic_DNA"/>
</dbReference>
<dbReference type="EMBL" id="CP002684">
    <property type="protein sequence ID" value="ANM58766.1"/>
    <property type="molecule type" value="Genomic_DNA"/>
</dbReference>
<dbReference type="EMBL" id="CP002684">
    <property type="protein sequence ID" value="ANM58767.1"/>
    <property type="molecule type" value="Genomic_DNA"/>
</dbReference>
<dbReference type="EMBL" id="CP002684">
    <property type="protein sequence ID" value="ANM58768.1"/>
    <property type="molecule type" value="Genomic_DNA"/>
</dbReference>
<dbReference type="EMBL" id="AY788907">
    <property type="protein sequence ID" value="AAV58825.1"/>
    <property type="molecule type" value="Genomic_DNA"/>
</dbReference>
<dbReference type="PIR" id="G86201">
    <property type="entry name" value="G86201"/>
</dbReference>
<dbReference type="RefSeq" id="NP_001321172.1">
    <property type="nucleotide sequence ID" value="NM_001331654.1"/>
</dbReference>
<dbReference type="RefSeq" id="NP_001321173.1">
    <property type="nucleotide sequence ID" value="NM_001331649.1"/>
</dbReference>
<dbReference type="RefSeq" id="NP_001321174.1">
    <property type="nucleotide sequence ID" value="NM_001331653.1"/>
</dbReference>
<dbReference type="RefSeq" id="NP_001321175.1">
    <property type="nucleotide sequence ID" value="NM_001331645.1"/>
</dbReference>
<dbReference type="RefSeq" id="NP_001321176.1">
    <property type="nucleotide sequence ID" value="NM_001331646.1"/>
</dbReference>
<dbReference type="RefSeq" id="NP_001321177.1">
    <property type="nucleotide sequence ID" value="NM_001331647.1"/>
</dbReference>
<dbReference type="RefSeq" id="NP_001321178.1">
    <property type="nucleotide sequence ID" value="NM_001331648.1"/>
</dbReference>
<dbReference type="RefSeq" id="NP_001321179.1">
    <property type="nucleotide sequence ID" value="NM_001331650.1"/>
</dbReference>
<dbReference type="RefSeq" id="NP_001321180.1">
    <property type="nucleotide sequence ID" value="NM_001331651.1"/>
</dbReference>
<dbReference type="RefSeq" id="NP_001321181.1">
    <property type="nucleotide sequence ID" value="NM_001331652.1"/>
</dbReference>
<dbReference type="RefSeq" id="NP_001321182.1">
    <property type="nucleotide sequence ID" value="NM_001331659.1"/>
</dbReference>
<dbReference type="RefSeq" id="NP_001321183.1">
    <property type="nucleotide sequence ID" value="NM_001331660.1"/>
</dbReference>
<dbReference type="RefSeq" id="NP_001321184.1">
    <property type="nucleotide sequence ID" value="NM_001331657.1"/>
</dbReference>
<dbReference type="RefSeq" id="NP_001321185.1">
    <property type="nucleotide sequence ID" value="NM_001331658.1"/>
</dbReference>
<dbReference type="RefSeq" id="NP_001321186.1">
    <property type="nucleotide sequence ID" value="NM_001331655.1"/>
</dbReference>
<dbReference type="RefSeq" id="NP_001321187.1">
    <property type="nucleotide sequence ID" value="NM_001331656.1"/>
</dbReference>
<dbReference type="RefSeq" id="NP_001321188.1">
    <property type="nucleotide sequence ID" value="NM_001331661.1"/>
</dbReference>
<dbReference type="RefSeq" id="NP_001321189.1">
    <property type="nucleotide sequence ID" value="NM_001331662.1"/>
</dbReference>
<dbReference type="RefSeq" id="NP_172156.2">
    <property type="nucleotide sequence ID" value="NM_100548.2"/>
</dbReference>
<dbReference type="SMR" id="Q9M9X9"/>
<dbReference type="FunCoup" id="Q9M9X9">
    <property type="interactions" value="962"/>
</dbReference>
<dbReference type="STRING" id="3702.Q9M9X9"/>
<dbReference type="iPTMnet" id="Q9M9X9"/>
<dbReference type="PaxDb" id="3702-AT1G06710.1"/>
<dbReference type="EnsemblPlants" id="AT1G06710.10">
    <property type="protein sequence ID" value="AT1G06710.10"/>
    <property type="gene ID" value="AT1G06710"/>
</dbReference>
<dbReference type="EnsemblPlants" id="AT1G06710.11">
    <property type="protein sequence ID" value="AT1G06710.11"/>
    <property type="gene ID" value="AT1G06710"/>
</dbReference>
<dbReference type="EnsemblPlants" id="AT1G06710.14">
    <property type="protein sequence ID" value="AT1G06710.14"/>
    <property type="gene ID" value="AT1G06710"/>
</dbReference>
<dbReference type="EnsemblPlants" id="AT1G06710.15">
    <property type="protein sequence ID" value="AT1G06710.15"/>
    <property type="gene ID" value="AT1G06710"/>
</dbReference>
<dbReference type="EnsemblPlants" id="AT1G06710.16">
    <property type="protein sequence ID" value="AT1G06710.16"/>
    <property type="gene ID" value="AT1G06710"/>
</dbReference>
<dbReference type="EnsemblPlants" id="AT1G06710.17">
    <property type="protein sequence ID" value="AT1G06710.17"/>
    <property type="gene ID" value="AT1G06710"/>
</dbReference>
<dbReference type="EnsemblPlants" id="AT1G06710.18">
    <property type="protein sequence ID" value="AT1G06710.18"/>
    <property type="gene ID" value="AT1G06710"/>
</dbReference>
<dbReference type="GeneID" id="837181"/>
<dbReference type="Gramene" id="AT1G06710.10">
    <property type="protein sequence ID" value="AT1G06710.10"/>
    <property type="gene ID" value="AT1G06710"/>
</dbReference>
<dbReference type="Gramene" id="AT1G06710.11">
    <property type="protein sequence ID" value="AT1G06710.11"/>
    <property type="gene ID" value="AT1G06710"/>
</dbReference>
<dbReference type="Gramene" id="AT1G06710.14">
    <property type="protein sequence ID" value="AT1G06710.14"/>
    <property type="gene ID" value="AT1G06710"/>
</dbReference>
<dbReference type="Gramene" id="AT1G06710.15">
    <property type="protein sequence ID" value="AT1G06710.15"/>
    <property type="gene ID" value="AT1G06710"/>
</dbReference>
<dbReference type="Gramene" id="AT1G06710.16">
    <property type="protein sequence ID" value="AT1G06710.16"/>
    <property type="gene ID" value="AT1G06710"/>
</dbReference>
<dbReference type="Gramene" id="AT1G06710.17">
    <property type="protein sequence ID" value="AT1G06710.17"/>
    <property type="gene ID" value="AT1G06710"/>
</dbReference>
<dbReference type="Gramene" id="AT1G06710.18">
    <property type="protein sequence ID" value="AT1G06710.18"/>
    <property type="gene ID" value="AT1G06710"/>
</dbReference>
<dbReference type="KEGG" id="ath:AT1G06710"/>
<dbReference type="Araport" id="AT1G06710"/>
<dbReference type="TAIR" id="AT1G06710">
    <property type="gene designation" value="MTSF1"/>
</dbReference>
<dbReference type="eggNOG" id="KOG4197">
    <property type="taxonomic scope" value="Eukaryota"/>
</dbReference>
<dbReference type="HOGENOM" id="CLU_002706_49_2_1"/>
<dbReference type="InParanoid" id="Q9M9X9"/>
<dbReference type="OMA" id="FKIICEM"/>
<dbReference type="PhylomeDB" id="Q9M9X9"/>
<dbReference type="PRO" id="PR:Q9M9X9"/>
<dbReference type="Proteomes" id="UP000006548">
    <property type="component" value="Chromosome 1"/>
</dbReference>
<dbReference type="ExpressionAtlas" id="Q9M9X9">
    <property type="expression patterns" value="baseline and differential"/>
</dbReference>
<dbReference type="GO" id="GO:0005739">
    <property type="term" value="C:mitochondrion"/>
    <property type="evidence" value="ECO:0007669"/>
    <property type="project" value="UniProtKB-SubCell"/>
</dbReference>
<dbReference type="Gene3D" id="1.25.40.10">
    <property type="entry name" value="Tetratricopeptide repeat domain"/>
    <property type="match status" value="8"/>
</dbReference>
<dbReference type="InterPro" id="IPR002885">
    <property type="entry name" value="Pentatricopeptide_rpt"/>
</dbReference>
<dbReference type="InterPro" id="IPR011990">
    <property type="entry name" value="TPR-like_helical_dom_sf"/>
</dbReference>
<dbReference type="NCBIfam" id="TIGR00756">
    <property type="entry name" value="PPR"/>
    <property type="match status" value="16"/>
</dbReference>
<dbReference type="PANTHER" id="PTHR47938:SF35">
    <property type="entry name" value="PENTATRICOPEPTIDE REPEAT-CONTAINING PROTEIN 4, MITOCHONDRIAL-RELATED"/>
    <property type="match status" value="1"/>
</dbReference>
<dbReference type="PANTHER" id="PTHR47938">
    <property type="entry name" value="RESPIRATORY COMPLEX I CHAPERONE (CIA84), PUTATIVE (AFU_ORTHOLOGUE AFUA_2G06020)-RELATED"/>
    <property type="match status" value="1"/>
</dbReference>
<dbReference type="Pfam" id="PF01535">
    <property type="entry name" value="PPR"/>
    <property type="match status" value="3"/>
</dbReference>
<dbReference type="Pfam" id="PF12854">
    <property type="entry name" value="PPR_1"/>
    <property type="match status" value="1"/>
</dbReference>
<dbReference type="Pfam" id="PF13041">
    <property type="entry name" value="PPR_2"/>
    <property type="match status" value="7"/>
</dbReference>
<dbReference type="SUPFAM" id="SSF81901">
    <property type="entry name" value="HCP-like"/>
    <property type="match status" value="1"/>
</dbReference>
<dbReference type="PROSITE" id="PS51375">
    <property type="entry name" value="PPR"/>
    <property type="match status" value="21"/>
</dbReference>
<organism>
    <name type="scientific">Arabidopsis thaliana</name>
    <name type="common">Mouse-ear cress</name>
    <dbReference type="NCBI Taxonomy" id="3702"/>
    <lineage>
        <taxon>Eukaryota</taxon>
        <taxon>Viridiplantae</taxon>
        <taxon>Streptophyta</taxon>
        <taxon>Embryophyta</taxon>
        <taxon>Tracheophyta</taxon>
        <taxon>Spermatophyta</taxon>
        <taxon>Magnoliopsida</taxon>
        <taxon>eudicotyledons</taxon>
        <taxon>Gunneridae</taxon>
        <taxon>Pentapetalae</taxon>
        <taxon>rosids</taxon>
        <taxon>malvids</taxon>
        <taxon>Brassicales</taxon>
        <taxon>Brassicaceae</taxon>
        <taxon>Camelineae</taxon>
        <taxon>Arabidopsis</taxon>
    </lineage>
</organism>
<evidence type="ECO:0000255" key="1"/>
<evidence type="ECO:0000305" key="2"/>
<protein>
    <recommendedName>
        <fullName>Pentatricopeptide repeat-containing protein At1g06710, mitochondrial</fullName>
    </recommendedName>
</protein>
<accession>Q9M9X9</accession>
<accession>F4IDR2</accession>
<accession>Q5S1W1</accession>
<sequence length="987" mass="111533">MNKTVVRCLLSRSHHPLIHFSTNLSLLHRVFTCSRYLTARFMSTPPPDDMFGFDDPFSPSDSREVVDLTKEYSFLHDSLVDYGNVNVHQVVPIITQSSIDARAIADAVSGVDDVFGRKSQKFLRQFREKLSESLVIEVLRLIARPSAVISFFVWAGRQIGYKHTAPVYNALVDLIVRDDDEKVPEEFLQQIRDDDKEVFGEFLNVLVRKHCRNGSFSIALEELGRLKDFRFRPSRSTYNCLIQAFLKADRLDSASLIHREMSLANLRMDGFTLRCFAYSLCKVGKWREALTLVETENFVPDTVFYTKLISGLCEASLFEEAMDFLNRMRATSCLPNVVTYSTLLCGCLNKKQLGRCKRVLNMMMMEGCYPSPKIFNSLVHAYCTSGDHSYAYKLLKKMVKCGHMPGYVVYNILIGSICGDKDSLNCDLLDLAEKAYSEMLAAGVVLNKINVSSFTRCLCSAGKYEKAFSVIREMIGQGFIPDTSTYSKVLNYLCNASKMELAFLLFEEMKRGGLVADVYTYTIMVDSFCKAGLIEQARKWFNEMREVGCTPNVVTYTALIHAYLKAKKVSYANELFETMLSEGCLPNIVTYSALIDGHCKAGQVEKACQIFERMCGSKDVPDVDMYFKQYDDNSERPNVVTYGALLDGFCKSHRVEEARKLLDAMSMEGCEPNQIVYDALIDGLCKVGKLDEAQEVKTEMSEHGFPATLYTYSSLIDRYFKVKRQDLASKVLSKMLENSCAPNVVIYTEMIDGLCKVGKTDEAYKLMQMMEEKGCQPNVVTYTAMIDGFGMIGKIETCLELLERMGSKGVAPNYVTYRVLIDHCCKNGALDVAHNLLEEMKQTHWPTHTAGYRKVIEGFNKEFIESLGLLDEIGQDDTAPFLSVYRLLIDNLIKAQRLEMALRLLEEVATFSATLVDYSSTYNSLIESLCLANKVETAFQLFSEMTKKGVIPEMQSFCSLIKGLFRNSKISEALLLLDFISHMVCPL</sequence>
<comment type="subcellular location">
    <subcellularLocation>
        <location evidence="2">Mitochondrion</location>
    </subcellularLocation>
</comment>
<comment type="similarity">
    <text evidence="2">Belongs to the PPR family. P subfamily.</text>
</comment>
<comment type="sequence caution" evidence="2">
    <conflict type="erroneous gene model prediction">
        <sequence resource="EMBL-CDS" id="AEE28027"/>
    </conflict>
</comment>
<comment type="online information" name="Pentatricopeptide repeat proteins">
    <link uri="https://ppr.plantenergy.uwa.edu.au"/>
</comment>